<organism>
    <name type="scientific">Pongo abelii</name>
    <name type="common">Sumatran orangutan</name>
    <name type="synonym">Pongo pygmaeus abelii</name>
    <dbReference type="NCBI Taxonomy" id="9601"/>
    <lineage>
        <taxon>Eukaryota</taxon>
        <taxon>Metazoa</taxon>
        <taxon>Chordata</taxon>
        <taxon>Craniata</taxon>
        <taxon>Vertebrata</taxon>
        <taxon>Euteleostomi</taxon>
        <taxon>Mammalia</taxon>
        <taxon>Eutheria</taxon>
        <taxon>Euarchontoglires</taxon>
        <taxon>Primates</taxon>
        <taxon>Haplorrhini</taxon>
        <taxon>Catarrhini</taxon>
        <taxon>Hominidae</taxon>
        <taxon>Pongo</taxon>
    </lineage>
</organism>
<feature type="chain" id="PRO_0000274421" description="Ectonucleoside triphosphate diphosphohydrolase 7">
    <location>
        <begin position="1"/>
        <end position="604"/>
    </location>
</feature>
<feature type="topological domain" description="Cytoplasmic" evidence="4">
    <location>
        <begin position="1"/>
        <end position="28"/>
    </location>
</feature>
<feature type="transmembrane region" description="Helical" evidence="4">
    <location>
        <begin position="29"/>
        <end position="49"/>
    </location>
</feature>
<feature type="topological domain" description="Vesicular" evidence="4">
    <location>
        <begin position="50"/>
        <end position="546"/>
    </location>
</feature>
<feature type="transmembrane region" description="Helical" evidence="4">
    <location>
        <begin position="547"/>
        <end position="567"/>
    </location>
</feature>
<feature type="topological domain" description="Cytoplasmic" evidence="4">
    <location>
        <begin position="568"/>
        <end position="604"/>
    </location>
</feature>
<feature type="active site" description="Proton acceptor" evidence="2">
    <location>
        <position position="217"/>
    </location>
</feature>
<feature type="glycosylation site" description="N-linked (GlcNAc...) asparagine" evidence="4">
    <location>
        <position position="330"/>
    </location>
</feature>
<feature type="disulfide bond" evidence="1">
    <location>
        <begin position="448"/>
        <end position="477"/>
    </location>
</feature>
<keyword id="KW-0106">Calcium</keyword>
<keyword id="KW-0968">Cytoplasmic vesicle</keyword>
<keyword id="KW-1015">Disulfide bond</keyword>
<keyword id="KW-0325">Glycoprotein</keyword>
<keyword id="KW-0378">Hydrolase</keyword>
<keyword id="KW-0460">Magnesium</keyword>
<keyword id="KW-0472">Membrane</keyword>
<keyword id="KW-0479">Metal-binding</keyword>
<keyword id="KW-1185">Reference proteome</keyword>
<keyword id="KW-0812">Transmembrane</keyword>
<keyword id="KW-1133">Transmembrane helix</keyword>
<name>ENTP7_PONAB</name>
<proteinExistence type="evidence at transcript level"/>
<comment type="function">
    <text evidence="3">Catalyzes the hydrolysis of nucleoside triphosphates and diphosphates in a calcium- or magnesium-dependent manner. Preferentially hydrolyzes nucleoside 5'-triphosphates, with substrate preference for UTP &gt; GTP &gt; CTP. Hydrolyzes ATP and nucleoside diphosphates only to a minor extent.</text>
</comment>
<comment type="catalytic activity">
    <reaction evidence="3">
        <text>a ribonucleoside 5'-triphosphate + H2O = a ribonucleoside 5'-diphosphate + phosphate + H(+)</text>
        <dbReference type="Rhea" id="RHEA:23680"/>
        <dbReference type="ChEBI" id="CHEBI:15377"/>
        <dbReference type="ChEBI" id="CHEBI:15378"/>
        <dbReference type="ChEBI" id="CHEBI:43474"/>
        <dbReference type="ChEBI" id="CHEBI:57930"/>
        <dbReference type="ChEBI" id="CHEBI:61557"/>
        <dbReference type="EC" id="3.6.1.15"/>
    </reaction>
</comment>
<comment type="catalytic activity">
    <reaction evidence="3">
        <text>UTP + H2O = UDP + phosphate + H(+)</text>
        <dbReference type="Rhea" id="RHEA:64900"/>
        <dbReference type="ChEBI" id="CHEBI:15377"/>
        <dbReference type="ChEBI" id="CHEBI:15378"/>
        <dbReference type="ChEBI" id="CHEBI:43474"/>
        <dbReference type="ChEBI" id="CHEBI:46398"/>
        <dbReference type="ChEBI" id="CHEBI:58223"/>
    </reaction>
</comment>
<comment type="catalytic activity">
    <reaction evidence="3">
        <text>GTP + H2O = GDP + phosphate + H(+)</text>
        <dbReference type="Rhea" id="RHEA:19669"/>
        <dbReference type="ChEBI" id="CHEBI:15377"/>
        <dbReference type="ChEBI" id="CHEBI:15378"/>
        <dbReference type="ChEBI" id="CHEBI:37565"/>
        <dbReference type="ChEBI" id="CHEBI:43474"/>
        <dbReference type="ChEBI" id="CHEBI:58189"/>
    </reaction>
</comment>
<comment type="catalytic activity">
    <reaction evidence="3">
        <text>CTP + H2O = CDP + phosphate + H(+)</text>
        <dbReference type="Rhea" id="RHEA:29387"/>
        <dbReference type="ChEBI" id="CHEBI:15377"/>
        <dbReference type="ChEBI" id="CHEBI:15378"/>
        <dbReference type="ChEBI" id="CHEBI:37563"/>
        <dbReference type="ChEBI" id="CHEBI:43474"/>
        <dbReference type="ChEBI" id="CHEBI:58069"/>
    </reaction>
</comment>
<comment type="cofactor">
    <cofactor evidence="3">
        <name>Ca(2+)</name>
        <dbReference type="ChEBI" id="CHEBI:29108"/>
    </cofactor>
    <cofactor evidence="3">
        <name>Mg(2+)</name>
        <dbReference type="ChEBI" id="CHEBI:18420"/>
    </cofactor>
</comment>
<comment type="subcellular location">
    <subcellularLocation>
        <location evidence="3">Cytoplasmic vesicle membrane</location>
        <topology evidence="4">Multi-pass membrane protein</topology>
    </subcellularLocation>
</comment>
<comment type="similarity">
    <text evidence="5">Belongs to the GDA1/CD39 NTPase family.</text>
</comment>
<gene>
    <name type="primary">ENTPD7</name>
</gene>
<sequence length="604" mass="68953">MARISFSYLCPASWYFTVPTVSPFLRQRVAFLGLFFISCLLLLMLIIDFRHWSASLPRDRQYERYLARVGELEATDTEDPNLNYGLVVDCGSSGSRIFVYFWPRHNGNPHDLLDIKQMRDRNSQPVVKKIKPGISAMADTPEHASDYLRPLLSFAAAHVPVKKHKETPLYILCTAGMRLLPERKQLAILADLVKDLPLEFDFLFSQSQAEVISGKQEGVYAWIGINFVLGRFDHEDESDAEATQELAAGRRRTVGILDMGGASLQIAYEVPTSTSVLPAKQEEAAKILLAEFNLGCDVQHTEHVYRVYVTTFLGFGGNFARQRYEDLVLNETLNKNRLLGQKTGLSPDNPFLDPCLPVGLTDVVERNSQVLHVRGRGDWVSCRAMLSPLLARSNTSQASLNGIYQSPIDFNNSEFYGFSEFFYCTEDVLRIGGRYHGPTFAKAAQDYCGMAWSVLTQRFKNGLFSSHADEHRLKYQCFKSAWMYQVLHEGFHFPYDYPNLRTAQLVYGREVQWTLGAILYKTRFLPLRDLRQEGVRQAHGSWFRLSFVYNHYLFFACILVVLLAIVLYLLRLRRIHHRQTRASAPLDLLWLEEVVPMMGVQVGP</sequence>
<protein>
    <recommendedName>
        <fullName>Ectonucleoside triphosphate diphosphohydrolase 7</fullName>
        <shortName>NTPDase 7</shortName>
        <ecNumber evidence="3">3.6.1.15</ecNumber>
    </recommendedName>
</protein>
<evidence type="ECO:0000250" key="1"/>
<evidence type="ECO:0000250" key="2">
    <source>
        <dbReference type="UniProtKB" id="O35795"/>
    </source>
</evidence>
<evidence type="ECO:0000250" key="3">
    <source>
        <dbReference type="UniProtKB" id="Q9NQZ7"/>
    </source>
</evidence>
<evidence type="ECO:0000255" key="4"/>
<evidence type="ECO:0000305" key="5"/>
<reference key="1">
    <citation type="submission" date="2004-11" db="EMBL/GenBank/DDBJ databases">
        <authorList>
            <consortium name="The German cDNA consortium"/>
        </authorList>
    </citation>
    <scope>NUCLEOTIDE SEQUENCE [LARGE SCALE MRNA]</scope>
    <source>
        <tissue>Kidney</tissue>
    </source>
</reference>
<dbReference type="EC" id="3.6.1.15" evidence="3"/>
<dbReference type="EMBL" id="CR857573">
    <property type="protein sequence ID" value="CAH89851.1"/>
    <property type="molecule type" value="mRNA"/>
</dbReference>
<dbReference type="RefSeq" id="NP_001128973.1">
    <property type="nucleotide sequence ID" value="NM_001135501.1"/>
</dbReference>
<dbReference type="SMR" id="Q5REF6"/>
<dbReference type="FunCoup" id="Q5REF6">
    <property type="interactions" value="589"/>
</dbReference>
<dbReference type="GlyCosmos" id="Q5REF6">
    <property type="glycosylation" value="1 site, No reported glycans"/>
</dbReference>
<dbReference type="GeneID" id="100190813"/>
<dbReference type="KEGG" id="pon:100190813"/>
<dbReference type="CTD" id="57089"/>
<dbReference type="eggNOG" id="KOG1386">
    <property type="taxonomic scope" value="Eukaryota"/>
</dbReference>
<dbReference type="InParanoid" id="Q5REF6"/>
<dbReference type="OrthoDB" id="6372431at2759"/>
<dbReference type="Proteomes" id="UP000001595">
    <property type="component" value="Unplaced"/>
</dbReference>
<dbReference type="GO" id="GO:0030659">
    <property type="term" value="C:cytoplasmic vesicle membrane"/>
    <property type="evidence" value="ECO:0000250"/>
    <property type="project" value="UniProtKB"/>
</dbReference>
<dbReference type="GO" id="GO:0005794">
    <property type="term" value="C:Golgi apparatus"/>
    <property type="evidence" value="ECO:0007669"/>
    <property type="project" value="TreeGrafter"/>
</dbReference>
<dbReference type="GO" id="GO:0043273">
    <property type="term" value="F:CTPase activity"/>
    <property type="evidence" value="ECO:0000250"/>
    <property type="project" value="UniProtKB"/>
</dbReference>
<dbReference type="GO" id="GO:0004382">
    <property type="term" value="F:GDP phosphatase activity"/>
    <property type="evidence" value="ECO:0007669"/>
    <property type="project" value="TreeGrafter"/>
</dbReference>
<dbReference type="GO" id="GO:0003924">
    <property type="term" value="F:GTPase activity"/>
    <property type="evidence" value="ECO:0000250"/>
    <property type="project" value="UniProtKB"/>
</dbReference>
<dbReference type="GO" id="GO:0046872">
    <property type="term" value="F:metal ion binding"/>
    <property type="evidence" value="ECO:0007669"/>
    <property type="project" value="UniProtKB-KW"/>
</dbReference>
<dbReference type="GO" id="GO:0017111">
    <property type="term" value="F:ribonucleoside triphosphate phosphatase activity"/>
    <property type="evidence" value="ECO:0000250"/>
    <property type="project" value="UniProtKB"/>
</dbReference>
<dbReference type="GO" id="GO:0045134">
    <property type="term" value="F:UDP phosphatase activity"/>
    <property type="evidence" value="ECO:0007669"/>
    <property type="project" value="TreeGrafter"/>
</dbReference>
<dbReference type="GO" id="GO:0006254">
    <property type="term" value="P:CTP catabolic process"/>
    <property type="evidence" value="ECO:0000250"/>
    <property type="project" value="UniProtKB"/>
</dbReference>
<dbReference type="GO" id="GO:0046039">
    <property type="term" value="P:GTP metabolic process"/>
    <property type="evidence" value="ECO:0000250"/>
    <property type="project" value="UniProtKB"/>
</dbReference>
<dbReference type="GO" id="GO:0034656">
    <property type="term" value="P:nucleobase-containing small molecule catabolic process"/>
    <property type="evidence" value="ECO:0000250"/>
    <property type="project" value="UniProtKB"/>
</dbReference>
<dbReference type="GO" id="GO:0006256">
    <property type="term" value="P:UDP catabolic process"/>
    <property type="evidence" value="ECO:0007669"/>
    <property type="project" value="TreeGrafter"/>
</dbReference>
<dbReference type="GO" id="GO:0046052">
    <property type="term" value="P:UTP catabolic process"/>
    <property type="evidence" value="ECO:0000250"/>
    <property type="project" value="UniProtKB"/>
</dbReference>
<dbReference type="CDD" id="cd24045">
    <property type="entry name" value="ASKHA_NBD_NTPDase4-like"/>
    <property type="match status" value="1"/>
</dbReference>
<dbReference type="FunFam" id="3.30.420.40:FF:000057">
    <property type="entry name" value="Ectonucleoside triphosphate diphosphohydrolase 4"/>
    <property type="match status" value="1"/>
</dbReference>
<dbReference type="FunFam" id="3.30.420.150:FF:000003">
    <property type="entry name" value="ectonucleoside triphosphate diphosphohydrolase 7"/>
    <property type="match status" value="1"/>
</dbReference>
<dbReference type="Gene3D" id="3.30.420.40">
    <property type="match status" value="1"/>
</dbReference>
<dbReference type="Gene3D" id="3.30.420.150">
    <property type="entry name" value="Exopolyphosphatase. Domain 2"/>
    <property type="match status" value="1"/>
</dbReference>
<dbReference type="InterPro" id="IPR000407">
    <property type="entry name" value="GDA1_CD39_NTPase"/>
</dbReference>
<dbReference type="PANTHER" id="PTHR11782">
    <property type="entry name" value="ADENOSINE/GUANOSINE DIPHOSPHATASE"/>
    <property type="match status" value="1"/>
</dbReference>
<dbReference type="PANTHER" id="PTHR11782:SF37">
    <property type="entry name" value="ECTONUCLEOSIDE TRIPHOSPHATE DIPHOSPHOHYDROLASE 7"/>
    <property type="match status" value="1"/>
</dbReference>
<dbReference type="Pfam" id="PF01150">
    <property type="entry name" value="GDA1_CD39"/>
    <property type="match status" value="1"/>
</dbReference>
<dbReference type="PROSITE" id="PS01238">
    <property type="entry name" value="GDA1_CD39_NTPASE"/>
    <property type="match status" value="1"/>
</dbReference>
<accession>Q5REF6</accession>